<accession>B5RQM7</accession>
<feature type="chain" id="PRO_1000091608" description="Ribonuclease HII">
    <location>
        <begin position="1"/>
        <end position="181"/>
    </location>
</feature>
<feature type="domain" description="RNase H type-2" evidence="2">
    <location>
        <begin position="1"/>
        <end position="181"/>
    </location>
</feature>
<feature type="binding site" evidence="1">
    <location>
        <position position="6"/>
    </location>
    <ligand>
        <name>a divalent metal cation</name>
        <dbReference type="ChEBI" id="CHEBI:60240"/>
    </ligand>
</feature>
<feature type="binding site" evidence="1">
    <location>
        <position position="7"/>
    </location>
    <ligand>
        <name>a divalent metal cation</name>
        <dbReference type="ChEBI" id="CHEBI:60240"/>
    </ligand>
</feature>
<feature type="binding site" evidence="1">
    <location>
        <position position="98"/>
    </location>
    <ligand>
        <name>a divalent metal cation</name>
        <dbReference type="ChEBI" id="CHEBI:60240"/>
    </ligand>
</feature>
<keyword id="KW-0963">Cytoplasm</keyword>
<keyword id="KW-0255">Endonuclease</keyword>
<keyword id="KW-0378">Hydrolase</keyword>
<keyword id="KW-0464">Manganese</keyword>
<keyword id="KW-0479">Metal-binding</keyword>
<keyword id="KW-0540">Nuclease</keyword>
<sequence>MICGIDEVGRGCIFGPVLSAAVIFKTKPNFLNELDDSKKLTKTKREYLSSLILENAYYAFADISNEIIDKINIHNASLLAMQIAYQKLNIECNLVLVDGKFIPKIQAKQIRAIIKGDSMIDEIKAASIIAKVQRDKLMVEYDKIYPLYGLKKNKGYPTKEHKDAIKKHGILSLHRKSFRLI</sequence>
<comment type="function">
    <text evidence="1">Endonuclease that specifically degrades the RNA of RNA-DNA hybrids.</text>
</comment>
<comment type="catalytic activity">
    <reaction evidence="1">
        <text>Endonucleolytic cleavage to 5'-phosphomonoester.</text>
        <dbReference type="EC" id="3.1.26.4"/>
    </reaction>
</comment>
<comment type="cofactor">
    <cofactor evidence="1">
        <name>Mn(2+)</name>
        <dbReference type="ChEBI" id="CHEBI:29035"/>
    </cofactor>
    <cofactor evidence="1">
        <name>Mg(2+)</name>
        <dbReference type="ChEBI" id="CHEBI:18420"/>
    </cofactor>
    <text evidence="1">Manganese or magnesium. Binds 1 divalent metal ion per monomer in the absence of substrate. May bind a second metal ion after substrate binding.</text>
</comment>
<comment type="subcellular location">
    <subcellularLocation>
        <location evidence="1">Cytoplasm</location>
    </subcellularLocation>
</comment>
<comment type="similarity">
    <text evidence="1">Belongs to the RNase HII family.</text>
</comment>
<name>RNH2_BORRA</name>
<organism>
    <name type="scientific">Borrelia recurrentis (strain A1)</name>
    <dbReference type="NCBI Taxonomy" id="412418"/>
    <lineage>
        <taxon>Bacteria</taxon>
        <taxon>Pseudomonadati</taxon>
        <taxon>Spirochaetota</taxon>
        <taxon>Spirochaetia</taxon>
        <taxon>Spirochaetales</taxon>
        <taxon>Borreliaceae</taxon>
        <taxon>Borrelia</taxon>
    </lineage>
</organism>
<proteinExistence type="inferred from homology"/>
<protein>
    <recommendedName>
        <fullName evidence="1">Ribonuclease HII</fullName>
        <shortName evidence="1">RNase HII</shortName>
        <ecNumber evidence="1">3.1.26.4</ecNumber>
    </recommendedName>
</protein>
<reference key="1">
    <citation type="journal article" date="2008" name="PLoS Genet.">
        <title>The genome of Borrelia recurrentis, the agent of deadly louse-borne relapsing fever, is a degraded subset of tick-borne Borrelia duttonii.</title>
        <authorList>
            <person name="Lescot M."/>
            <person name="Audic S."/>
            <person name="Robert C."/>
            <person name="Nguyen T.T."/>
            <person name="Blanc G."/>
            <person name="Cutler S.J."/>
            <person name="Wincker P."/>
            <person name="Couloux A."/>
            <person name="Claverie J.-M."/>
            <person name="Raoult D."/>
            <person name="Drancourt M."/>
        </authorList>
    </citation>
    <scope>NUCLEOTIDE SEQUENCE [LARGE SCALE GENOMIC DNA]</scope>
    <source>
        <strain>A1</strain>
    </source>
</reference>
<dbReference type="EC" id="3.1.26.4" evidence="1"/>
<dbReference type="EMBL" id="CP000993">
    <property type="protein sequence ID" value="ACH94311.1"/>
    <property type="molecule type" value="Genomic_DNA"/>
</dbReference>
<dbReference type="RefSeq" id="WP_012538621.1">
    <property type="nucleotide sequence ID" value="NC_011244.1"/>
</dbReference>
<dbReference type="SMR" id="B5RQM7"/>
<dbReference type="KEGG" id="bre:BRE_49"/>
<dbReference type="HOGENOM" id="CLU_036532_3_1_12"/>
<dbReference type="Proteomes" id="UP000000612">
    <property type="component" value="Chromosome"/>
</dbReference>
<dbReference type="GO" id="GO:0005737">
    <property type="term" value="C:cytoplasm"/>
    <property type="evidence" value="ECO:0007669"/>
    <property type="project" value="UniProtKB-SubCell"/>
</dbReference>
<dbReference type="GO" id="GO:0032299">
    <property type="term" value="C:ribonuclease H2 complex"/>
    <property type="evidence" value="ECO:0007669"/>
    <property type="project" value="TreeGrafter"/>
</dbReference>
<dbReference type="GO" id="GO:0030145">
    <property type="term" value="F:manganese ion binding"/>
    <property type="evidence" value="ECO:0007669"/>
    <property type="project" value="UniProtKB-UniRule"/>
</dbReference>
<dbReference type="GO" id="GO:0003723">
    <property type="term" value="F:RNA binding"/>
    <property type="evidence" value="ECO:0007669"/>
    <property type="project" value="InterPro"/>
</dbReference>
<dbReference type="GO" id="GO:0004523">
    <property type="term" value="F:RNA-DNA hybrid ribonuclease activity"/>
    <property type="evidence" value="ECO:0007669"/>
    <property type="project" value="UniProtKB-UniRule"/>
</dbReference>
<dbReference type="GO" id="GO:0043137">
    <property type="term" value="P:DNA replication, removal of RNA primer"/>
    <property type="evidence" value="ECO:0007669"/>
    <property type="project" value="TreeGrafter"/>
</dbReference>
<dbReference type="GO" id="GO:0006298">
    <property type="term" value="P:mismatch repair"/>
    <property type="evidence" value="ECO:0007669"/>
    <property type="project" value="TreeGrafter"/>
</dbReference>
<dbReference type="CDD" id="cd07182">
    <property type="entry name" value="RNase_HII_bacteria_HII_like"/>
    <property type="match status" value="1"/>
</dbReference>
<dbReference type="Gene3D" id="3.30.420.10">
    <property type="entry name" value="Ribonuclease H-like superfamily/Ribonuclease H"/>
    <property type="match status" value="1"/>
</dbReference>
<dbReference type="HAMAP" id="MF_00052_B">
    <property type="entry name" value="RNase_HII_B"/>
    <property type="match status" value="1"/>
</dbReference>
<dbReference type="InterPro" id="IPR022898">
    <property type="entry name" value="RNase_HII"/>
</dbReference>
<dbReference type="InterPro" id="IPR001352">
    <property type="entry name" value="RNase_HII/HIII"/>
</dbReference>
<dbReference type="InterPro" id="IPR024567">
    <property type="entry name" value="RNase_HII/HIII_dom"/>
</dbReference>
<dbReference type="InterPro" id="IPR012337">
    <property type="entry name" value="RNaseH-like_sf"/>
</dbReference>
<dbReference type="InterPro" id="IPR036397">
    <property type="entry name" value="RNaseH_sf"/>
</dbReference>
<dbReference type="NCBIfam" id="NF000595">
    <property type="entry name" value="PRK00015.1-3"/>
    <property type="match status" value="1"/>
</dbReference>
<dbReference type="PANTHER" id="PTHR10954:SF23">
    <property type="entry name" value="RIBONUCLEASE"/>
    <property type="match status" value="1"/>
</dbReference>
<dbReference type="PANTHER" id="PTHR10954">
    <property type="entry name" value="RIBONUCLEASE H2 SUBUNIT A"/>
    <property type="match status" value="1"/>
</dbReference>
<dbReference type="Pfam" id="PF01351">
    <property type="entry name" value="RNase_HII"/>
    <property type="match status" value="1"/>
</dbReference>
<dbReference type="SUPFAM" id="SSF53098">
    <property type="entry name" value="Ribonuclease H-like"/>
    <property type="match status" value="1"/>
</dbReference>
<dbReference type="PROSITE" id="PS51975">
    <property type="entry name" value="RNASE_H_2"/>
    <property type="match status" value="1"/>
</dbReference>
<gene>
    <name evidence="1" type="primary">rnhB</name>
    <name type="ordered locus">BRE_49</name>
</gene>
<evidence type="ECO:0000255" key="1">
    <source>
        <dbReference type="HAMAP-Rule" id="MF_00052"/>
    </source>
</evidence>
<evidence type="ECO:0000255" key="2">
    <source>
        <dbReference type="PROSITE-ProRule" id="PRU01319"/>
    </source>
</evidence>